<reference key="1">
    <citation type="journal article" date="2004" name="Nature">
        <title>Genome evolution in yeasts.</title>
        <authorList>
            <person name="Dujon B."/>
            <person name="Sherman D."/>
            <person name="Fischer G."/>
            <person name="Durrens P."/>
            <person name="Casaregola S."/>
            <person name="Lafontaine I."/>
            <person name="de Montigny J."/>
            <person name="Marck C."/>
            <person name="Neuveglise C."/>
            <person name="Talla E."/>
            <person name="Goffard N."/>
            <person name="Frangeul L."/>
            <person name="Aigle M."/>
            <person name="Anthouard V."/>
            <person name="Babour A."/>
            <person name="Barbe V."/>
            <person name="Barnay S."/>
            <person name="Blanchin S."/>
            <person name="Beckerich J.-M."/>
            <person name="Beyne E."/>
            <person name="Bleykasten C."/>
            <person name="Boisrame A."/>
            <person name="Boyer J."/>
            <person name="Cattolico L."/>
            <person name="Confanioleri F."/>
            <person name="de Daruvar A."/>
            <person name="Despons L."/>
            <person name="Fabre E."/>
            <person name="Fairhead C."/>
            <person name="Ferry-Dumazet H."/>
            <person name="Groppi A."/>
            <person name="Hantraye F."/>
            <person name="Hennequin C."/>
            <person name="Jauniaux N."/>
            <person name="Joyet P."/>
            <person name="Kachouri R."/>
            <person name="Kerrest A."/>
            <person name="Koszul R."/>
            <person name="Lemaire M."/>
            <person name="Lesur I."/>
            <person name="Ma L."/>
            <person name="Muller H."/>
            <person name="Nicaud J.-M."/>
            <person name="Nikolski M."/>
            <person name="Oztas S."/>
            <person name="Ozier-Kalogeropoulos O."/>
            <person name="Pellenz S."/>
            <person name="Potier S."/>
            <person name="Richard G.-F."/>
            <person name="Straub M.-L."/>
            <person name="Suleau A."/>
            <person name="Swennen D."/>
            <person name="Tekaia F."/>
            <person name="Wesolowski-Louvel M."/>
            <person name="Westhof E."/>
            <person name="Wirth B."/>
            <person name="Zeniou-Meyer M."/>
            <person name="Zivanovic Y."/>
            <person name="Bolotin-Fukuhara M."/>
            <person name="Thierry A."/>
            <person name="Bouchier C."/>
            <person name="Caudron B."/>
            <person name="Scarpelli C."/>
            <person name="Gaillardin C."/>
            <person name="Weissenbach J."/>
            <person name="Wincker P."/>
            <person name="Souciet J.-L."/>
        </authorList>
    </citation>
    <scope>NUCLEOTIDE SEQUENCE [LARGE SCALE GENOMIC DNA]</scope>
    <source>
        <strain>ATCC 36239 / CBS 767 / BCRC 21394 / JCM 1990 / NBRC 0083 / IGC 2968</strain>
    </source>
</reference>
<keyword id="KW-0963">Cytoplasm</keyword>
<keyword id="KW-0378">Hydrolase</keyword>
<keyword id="KW-0479">Metal-binding</keyword>
<keyword id="KW-0482">Metalloprotease</keyword>
<keyword id="KW-0539">Nucleus</keyword>
<keyword id="KW-0645">Protease</keyword>
<keyword id="KW-1185">Reference proteome</keyword>
<sequence length="564" mass="62176">MQLAVHQDDADILLKERNQLNESILDKYRVAGQIAQTGLKYVISLINDSYHLGKTETPYTCQELCVMGDSMVTRLLAKVYNNDIREKGISNPVSIELNEIVGNFAPEIDDASKFTFNAGDIVTITLGVHIDGYAANVSHTVVIYPTGVTIDNELKPPGPLLGSKADSICAAHIATETVVALLGMALTPEKLPTQLDPNNTKLVTGKQIRNIVNSIAESFNCTVVPGSKVRRIRRFLAGQAEGVVAEKDFKGVVWSESDQEELLLNKYNKNDDQQLVLHNKQGSEFTNNSSAIPTDEFVVAADEVYNVDIKMCSTSDFKELGLVTLEEIDEFTGLNNKTNEFKTKSTIYIRDYAVNYQLRLKNSRSLLGKIDKEFTVFPFKLSHTSPSFPATNSQDLATLKKELIANKLGLSELANRHLINAKPIQVTKFIPFETILKTSNPTGKHGIDSNKPALPGMEIPLPHLGISSLKLKALLKNSSSIANARESTTVILNSFNNANEVIRLTGGNNSAPSWVHSDYSLNPQCKESVDHLLQLTKDKRFGIKVKECQPMKLTADAPESMQMD</sequence>
<evidence type="ECO:0000250" key="1"/>
<evidence type="ECO:0000305" key="2"/>
<organism>
    <name type="scientific">Debaryomyces hansenii (strain ATCC 36239 / CBS 767 / BCRC 21394 / JCM 1990 / NBRC 0083 / IGC 2968)</name>
    <name type="common">Yeast</name>
    <name type="synonym">Torulaspora hansenii</name>
    <dbReference type="NCBI Taxonomy" id="284592"/>
    <lineage>
        <taxon>Eukaryota</taxon>
        <taxon>Fungi</taxon>
        <taxon>Dikarya</taxon>
        <taxon>Ascomycota</taxon>
        <taxon>Saccharomycotina</taxon>
        <taxon>Pichiomycetes</taxon>
        <taxon>Debaryomycetaceae</taxon>
        <taxon>Debaryomyces</taxon>
    </lineage>
</organism>
<accession>Q6BI90</accession>
<feature type="chain" id="PRO_0000148995" description="Probable metalloprotease ARX1">
    <location>
        <begin position="1"/>
        <end position="564"/>
    </location>
</feature>
<protein>
    <recommendedName>
        <fullName>Probable metalloprotease ARX1</fullName>
        <ecNumber>3.-.-.-</ecNumber>
    </recommendedName>
    <alternativeName>
        <fullName>Associated with ribosomal export complex protein 1</fullName>
    </alternativeName>
</protein>
<name>ARX1_DEBHA</name>
<comment type="function">
    <text evidence="1">Probable metalloprotease involved in proper assembly of pre-ribosomal particles during the biogenesis of the 60S ribosomal subunit. Accompanies the pre-60S particles to the cytoplasm (By similarity).</text>
</comment>
<comment type="subunit">
    <text evidence="1">Component of the nucleoplasmic and cytoplasmic pre-60S ribosomal particles.</text>
</comment>
<comment type="subcellular location">
    <subcellularLocation>
        <location evidence="1">Cytoplasm</location>
    </subcellularLocation>
    <subcellularLocation>
        <location evidence="1">Nucleus</location>
    </subcellularLocation>
</comment>
<comment type="similarity">
    <text evidence="2">Belongs to the peptidase M24 family.</text>
</comment>
<gene>
    <name type="primary">ARX1</name>
    <name type="ordered locus">DEHA2G12562g</name>
</gene>
<proteinExistence type="inferred from homology"/>
<dbReference type="EC" id="3.-.-.-"/>
<dbReference type="EMBL" id="CR382139">
    <property type="protein sequence ID" value="CAG90567.2"/>
    <property type="molecule type" value="Genomic_DNA"/>
</dbReference>
<dbReference type="RefSeq" id="XP_462081.2">
    <property type="nucleotide sequence ID" value="XM_462081.1"/>
</dbReference>
<dbReference type="SMR" id="Q6BI90"/>
<dbReference type="FunCoup" id="Q6BI90">
    <property type="interactions" value="412"/>
</dbReference>
<dbReference type="STRING" id="284592.Q6BI90"/>
<dbReference type="GeneID" id="2904993"/>
<dbReference type="KEGG" id="dha:DEHA2G12562g"/>
<dbReference type="VEuPathDB" id="FungiDB:DEHA2G12562g"/>
<dbReference type="eggNOG" id="KOG2776">
    <property type="taxonomic scope" value="Eukaryota"/>
</dbReference>
<dbReference type="HOGENOM" id="CLU_477525_0_0_1"/>
<dbReference type="InParanoid" id="Q6BI90"/>
<dbReference type="OMA" id="KPSWVHS"/>
<dbReference type="OrthoDB" id="5876363at2759"/>
<dbReference type="Proteomes" id="UP000000599">
    <property type="component" value="Chromosome G"/>
</dbReference>
<dbReference type="GO" id="GO:0005737">
    <property type="term" value="C:cytoplasm"/>
    <property type="evidence" value="ECO:0007669"/>
    <property type="project" value="UniProtKB-SubCell"/>
</dbReference>
<dbReference type="GO" id="GO:0005730">
    <property type="term" value="C:nucleolus"/>
    <property type="evidence" value="ECO:0007669"/>
    <property type="project" value="EnsemblFungi"/>
</dbReference>
<dbReference type="GO" id="GO:0005654">
    <property type="term" value="C:nucleoplasm"/>
    <property type="evidence" value="ECO:0007669"/>
    <property type="project" value="EnsemblFungi"/>
</dbReference>
<dbReference type="GO" id="GO:0030687">
    <property type="term" value="C:preribosome, large subunit precursor"/>
    <property type="evidence" value="ECO:0007669"/>
    <property type="project" value="EnsemblFungi"/>
</dbReference>
<dbReference type="GO" id="GO:0046872">
    <property type="term" value="F:metal ion binding"/>
    <property type="evidence" value="ECO:0007669"/>
    <property type="project" value="UniProtKB-KW"/>
</dbReference>
<dbReference type="GO" id="GO:0008237">
    <property type="term" value="F:metallopeptidase activity"/>
    <property type="evidence" value="ECO:0007669"/>
    <property type="project" value="UniProtKB-KW"/>
</dbReference>
<dbReference type="GO" id="GO:0006508">
    <property type="term" value="P:proteolysis"/>
    <property type="evidence" value="ECO:0007669"/>
    <property type="project" value="UniProtKB-KW"/>
</dbReference>
<dbReference type="GO" id="GO:0000055">
    <property type="term" value="P:ribosomal large subunit export from nucleus"/>
    <property type="evidence" value="ECO:0007669"/>
    <property type="project" value="EnsemblFungi"/>
</dbReference>
<dbReference type="Gene3D" id="3.90.230.10">
    <property type="entry name" value="Creatinase/methionine aminopeptidase superfamily"/>
    <property type="match status" value="1"/>
</dbReference>
<dbReference type="Gene3D" id="1.10.10.10">
    <property type="entry name" value="Winged helix-like DNA-binding domain superfamily/Winged helix DNA-binding domain"/>
    <property type="match status" value="1"/>
</dbReference>
<dbReference type="InterPro" id="IPR036005">
    <property type="entry name" value="Creatinase/aminopeptidase-like"/>
</dbReference>
<dbReference type="InterPro" id="IPR047113">
    <property type="entry name" value="PA2G4/ARX1"/>
</dbReference>
<dbReference type="InterPro" id="IPR036388">
    <property type="entry name" value="WH-like_DNA-bd_sf"/>
</dbReference>
<dbReference type="InterPro" id="IPR036390">
    <property type="entry name" value="WH_DNA-bd_sf"/>
</dbReference>
<dbReference type="PANTHER" id="PTHR10804:SF102">
    <property type="entry name" value="METALLOPROTEASE ARX1-RELATED"/>
    <property type="match status" value="1"/>
</dbReference>
<dbReference type="PANTHER" id="PTHR10804">
    <property type="entry name" value="PROTEASE FAMILY M24 METHIONYL AMINOPEPTIDASE, AMINOPEPTIDASE P"/>
    <property type="match status" value="1"/>
</dbReference>
<dbReference type="SUPFAM" id="SSF55920">
    <property type="entry name" value="Creatinase/aminopeptidase"/>
    <property type="match status" value="1"/>
</dbReference>
<dbReference type="SUPFAM" id="SSF46785">
    <property type="entry name" value="Winged helix' DNA-binding domain"/>
    <property type="match status" value="1"/>
</dbReference>